<feature type="chain" id="PRO_1000214518" description="Large ribosomal subunit protein uL3">
    <location>
        <begin position="1"/>
        <end position="215"/>
    </location>
</feature>
<feature type="region of interest" description="Disordered" evidence="2">
    <location>
        <begin position="136"/>
        <end position="155"/>
    </location>
</feature>
<feature type="modified residue" description="N5-methylglutamine" evidence="1">
    <location>
        <position position="151"/>
    </location>
</feature>
<evidence type="ECO:0000255" key="1">
    <source>
        <dbReference type="HAMAP-Rule" id="MF_01325"/>
    </source>
</evidence>
<evidence type="ECO:0000256" key="2">
    <source>
        <dbReference type="SAM" id="MobiDB-lite"/>
    </source>
</evidence>
<evidence type="ECO:0000305" key="3"/>
<dbReference type="EMBL" id="CP001612">
    <property type="protein sequence ID" value="ACP53767.1"/>
    <property type="molecule type" value="Genomic_DNA"/>
</dbReference>
<dbReference type="RefSeq" id="WP_012719920.1">
    <property type="nucleotide sequence ID" value="NC_012633.1"/>
</dbReference>
<dbReference type="SMR" id="C3PPA7"/>
<dbReference type="KEGG" id="raf:RAF_ORF0912"/>
<dbReference type="HOGENOM" id="CLU_044142_2_0_5"/>
<dbReference type="Proteomes" id="UP000002305">
    <property type="component" value="Chromosome"/>
</dbReference>
<dbReference type="GO" id="GO:1990904">
    <property type="term" value="C:ribonucleoprotein complex"/>
    <property type="evidence" value="ECO:0007669"/>
    <property type="project" value="UniProtKB-KW"/>
</dbReference>
<dbReference type="GO" id="GO:0005840">
    <property type="term" value="C:ribosome"/>
    <property type="evidence" value="ECO:0007669"/>
    <property type="project" value="UniProtKB-KW"/>
</dbReference>
<dbReference type="GO" id="GO:0019843">
    <property type="term" value="F:rRNA binding"/>
    <property type="evidence" value="ECO:0007669"/>
    <property type="project" value="UniProtKB-UniRule"/>
</dbReference>
<dbReference type="GO" id="GO:0003735">
    <property type="term" value="F:structural constituent of ribosome"/>
    <property type="evidence" value="ECO:0007669"/>
    <property type="project" value="InterPro"/>
</dbReference>
<dbReference type="GO" id="GO:0006412">
    <property type="term" value="P:translation"/>
    <property type="evidence" value="ECO:0007669"/>
    <property type="project" value="UniProtKB-UniRule"/>
</dbReference>
<dbReference type="FunFam" id="2.40.30.10:FF:000004">
    <property type="entry name" value="50S ribosomal protein L3"/>
    <property type="match status" value="1"/>
</dbReference>
<dbReference type="Gene3D" id="3.30.160.810">
    <property type="match status" value="1"/>
</dbReference>
<dbReference type="Gene3D" id="2.40.30.10">
    <property type="entry name" value="Translation factors"/>
    <property type="match status" value="1"/>
</dbReference>
<dbReference type="HAMAP" id="MF_01325_B">
    <property type="entry name" value="Ribosomal_uL3_B"/>
    <property type="match status" value="1"/>
</dbReference>
<dbReference type="InterPro" id="IPR000597">
    <property type="entry name" value="Ribosomal_uL3"/>
</dbReference>
<dbReference type="InterPro" id="IPR019927">
    <property type="entry name" value="Ribosomal_uL3_bac/org-type"/>
</dbReference>
<dbReference type="InterPro" id="IPR019926">
    <property type="entry name" value="Ribosomal_uL3_CS"/>
</dbReference>
<dbReference type="InterPro" id="IPR009000">
    <property type="entry name" value="Transl_B-barrel_sf"/>
</dbReference>
<dbReference type="NCBIfam" id="TIGR03625">
    <property type="entry name" value="L3_bact"/>
    <property type="match status" value="1"/>
</dbReference>
<dbReference type="PANTHER" id="PTHR11229">
    <property type="entry name" value="50S RIBOSOMAL PROTEIN L3"/>
    <property type="match status" value="1"/>
</dbReference>
<dbReference type="PANTHER" id="PTHR11229:SF16">
    <property type="entry name" value="LARGE RIBOSOMAL SUBUNIT PROTEIN UL3C"/>
    <property type="match status" value="1"/>
</dbReference>
<dbReference type="Pfam" id="PF00297">
    <property type="entry name" value="Ribosomal_L3"/>
    <property type="match status" value="1"/>
</dbReference>
<dbReference type="SUPFAM" id="SSF50447">
    <property type="entry name" value="Translation proteins"/>
    <property type="match status" value="1"/>
</dbReference>
<dbReference type="PROSITE" id="PS00474">
    <property type="entry name" value="RIBOSOMAL_L3"/>
    <property type="match status" value="1"/>
</dbReference>
<keyword id="KW-0488">Methylation</keyword>
<keyword id="KW-0687">Ribonucleoprotein</keyword>
<keyword id="KW-0689">Ribosomal protein</keyword>
<keyword id="KW-0694">RNA-binding</keyword>
<keyword id="KW-0699">rRNA-binding</keyword>
<name>RL3_RICAE</name>
<sequence length="215" mass="23660">MRTGIIAQKIGMTSVFNDKGERISLTLVKVDDCQVVGHKTLEKHGYNALVVGVKDKKISRVTKPMRQVFANAKISPKTKLKEFRISEENFIDIAASLEVDHFTAGQFVDITATTIGKGFAGSMKRHNFRGLEASHGVSISHRSHGSTGQRQDPGKVFKGKKMAGHMGCNQVTIQNLKIFAVDKERKLIMIQGSIPGHKNSYLSVKDAIKKISITV</sequence>
<organism>
    <name type="scientific">Rickettsia africae (strain ESF-5)</name>
    <dbReference type="NCBI Taxonomy" id="347255"/>
    <lineage>
        <taxon>Bacteria</taxon>
        <taxon>Pseudomonadati</taxon>
        <taxon>Pseudomonadota</taxon>
        <taxon>Alphaproteobacteria</taxon>
        <taxon>Rickettsiales</taxon>
        <taxon>Rickettsiaceae</taxon>
        <taxon>Rickettsieae</taxon>
        <taxon>Rickettsia</taxon>
        <taxon>spotted fever group</taxon>
    </lineage>
</organism>
<protein>
    <recommendedName>
        <fullName evidence="1">Large ribosomal subunit protein uL3</fullName>
    </recommendedName>
    <alternativeName>
        <fullName evidence="3">50S ribosomal protein L3</fullName>
    </alternativeName>
</protein>
<reference key="1">
    <citation type="journal article" date="2009" name="BMC Genomics">
        <title>Analysis of the Rickettsia africae genome reveals that virulence acquisition in Rickettsia species may be explained by genome reduction.</title>
        <authorList>
            <person name="Fournier P.-E."/>
            <person name="El Karkouri K."/>
            <person name="Leroy Q."/>
            <person name="Robert C."/>
            <person name="Giumelli B."/>
            <person name="Renesto P."/>
            <person name="Socolovschi C."/>
            <person name="Parola P."/>
            <person name="Audic S."/>
            <person name="Raoult D."/>
        </authorList>
    </citation>
    <scope>NUCLEOTIDE SEQUENCE [LARGE SCALE GENOMIC DNA]</scope>
    <source>
        <strain>ESF-5</strain>
    </source>
</reference>
<gene>
    <name evidence="1" type="primary">rplC</name>
    <name type="ordered locus">RAF_ORF0912</name>
</gene>
<accession>C3PPA7</accession>
<proteinExistence type="inferred from homology"/>
<comment type="function">
    <text evidence="1">One of the primary rRNA binding proteins, it binds directly near the 3'-end of the 23S rRNA, where it nucleates assembly of the 50S subunit.</text>
</comment>
<comment type="subunit">
    <text evidence="1">Part of the 50S ribosomal subunit. Forms a cluster with proteins L14 and L19.</text>
</comment>
<comment type="PTM">
    <text evidence="1">Methylated by PrmB.</text>
</comment>
<comment type="similarity">
    <text evidence="1">Belongs to the universal ribosomal protein uL3 family.</text>
</comment>